<dbReference type="EMBL" id="M90969">
    <property type="protein sequence ID" value="AAA92855.1"/>
    <property type="molecule type" value="Genomic_DNA"/>
</dbReference>
<dbReference type="PIR" id="D43943">
    <property type="entry name" value="D43943"/>
</dbReference>
<dbReference type="RefSeq" id="WP_015081785.1">
    <property type="nucleotide sequence ID" value="NZ_WJUU01000069.1"/>
</dbReference>
<dbReference type="SMR" id="P0A3G5"/>
<dbReference type="TCDB" id="3.A.1.112.3">
    <property type="family name" value="the atp-binding cassette (abc) superfamily"/>
</dbReference>
<dbReference type="GO" id="GO:0005886">
    <property type="term" value="C:plasma membrane"/>
    <property type="evidence" value="ECO:0007669"/>
    <property type="project" value="UniProtKB-SubCell"/>
</dbReference>
<dbReference type="GO" id="GO:0043213">
    <property type="term" value="P:bacteriocin transport"/>
    <property type="evidence" value="ECO:0007669"/>
    <property type="project" value="UniProtKB-KW"/>
</dbReference>
<dbReference type="GO" id="GO:0009306">
    <property type="term" value="P:protein secretion"/>
    <property type="evidence" value="ECO:0007669"/>
    <property type="project" value="InterPro"/>
</dbReference>
<dbReference type="Gene3D" id="2.40.30.170">
    <property type="match status" value="1"/>
</dbReference>
<dbReference type="InterPro" id="IPR005696">
    <property type="entry name" value="MesE/LcnD"/>
</dbReference>
<dbReference type="InterPro" id="IPR050739">
    <property type="entry name" value="MFP"/>
</dbReference>
<dbReference type="InterPro" id="IPR006144">
    <property type="entry name" value="Secretion_HlyD_CS"/>
</dbReference>
<dbReference type="NCBIfam" id="TIGR01000">
    <property type="entry name" value="bacteriocin_acc"/>
    <property type="match status" value="1"/>
</dbReference>
<dbReference type="PANTHER" id="PTHR30386">
    <property type="entry name" value="MEMBRANE FUSION SUBUNIT OF EMRAB-TOLC MULTIDRUG EFFLUX PUMP"/>
    <property type="match status" value="1"/>
</dbReference>
<dbReference type="PANTHER" id="PTHR30386:SF26">
    <property type="entry name" value="TRANSPORT PROTEIN COMB"/>
    <property type="match status" value="1"/>
</dbReference>
<dbReference type="Pfam" id="PF13437">
    <property type="entry name" value="HlyD_3"/>
    <property type="match status" value="1"/>
</dbReference>
<dbReference type="PROSITE" id="PS00543">
    <property type="entry name" value="HLYD_FAMILY"/>
    <property type="match status" value="1"/>
</dbReference>
<accession>P0A3G5</accession>
<accession>Q00565</accession>
<geneLocation type="plasmid">
    <name>pNP2</name>
</geneLocation>
<sequence length="474" mass="52538">MFDKKLLESSELYDKRYRNFSTLIILPLFILLVGGVIFTFFAHKELTVISTGSIEPTKIVAKIQSTNANPIIENNLKEGEAVKENSLLLKYNGTPEQTQLSELLTQKKQALDKKVQLDLLQRSLTNEKNEFPTADSFGYEKSFENYEAQVKSLEATIQKSNQAVEDQNKSTESQKQAIQNQVATLQQAIQNYSEIENAVSSGGGVSQDNPYLSQYNSYQAQQATLEADLKNQKNPDETAKQAAKSQEESLKSQFLSGLASSKDSLKSQIQSFNVQESSLTGSNAYDNSQSSQILTLKSQALSASNKEMTDLNSTLTDLETKISLQKQDDQYSQVFAEQAGVLHVLPDILGMKKIPIGTPIAEIYPLLKSETQVNLTSYIPSTQISGMKVGQKVRFTVQQNLPQPEILTGIINQIDSAPTAFKEGNAYKVSATTTINAKDLPNIRYGLQGKTVTIIGKKTYFNYFLDKIMGRGNQ</sequence>
<reference key="1">
    <citation type="journal article" date="1992" name="Appl. Environ. Microbiol.">
        <title>Molecular analyses of the lactococcin A gene cluster from Lactococcus lactis subsp. lactis biovar diacetylactis WM4.</title>
        <authorList>
            <person name="Stoddard G.W."/>
            <person name="Petzel J.P."/>
            <person name="van Belkum M.J."/>
            <person name="Kok J."/>
            <person name="McKay L.L."/>
        </authorList>
    </citation>
    <scope>NUCLEOTIDE SEQUENCE [GENOMIC DNA]</scope>
    <source>
        <strain>Biovar diacetylactis WM4</strain>
        <plasmid>pNP2</plasmid>
    </source>
</reference>
<reference key="2">
    <citation type="journal article" date="1996" name="J. Bacteriol.">
        <title>Topology of LcnD, a protein implicated in the transport of bacteriocins from Lactococcus lactis.</title>
        <authorList>
            <person name="Franke C.M."/>
            <person name="Leenhouts K.J."/>
            <person name="Haandrikman A.J."/>
            <person name="Kok J."/>
            <person name="Venema G."/>
            <person name="Venema K."/>
        </authorList>
    </citation>
    <scope>TOPOLOGY</scope>
</reference>
<gene>
    <name type="primary">lcnD</name>
</gene>
<evidence type="ECO:0000305" key="1"/>
<evidence type="ECO:0000305" key="2">
    <source>
    </source>
</evidence>
<proteinExistence type="evidence at protein level"/>
<protein>
    <recommendedName>
        <fullName>Lactococcin A secretion protein LcnD</fullName>
    </recommendedName>
</protein>
<organism>
    <name type="scientific">Lactococcus lactis subsp. lactis</name>
    <name type="common">Streptococcus lactis</name>
    <dbReference type="NCBI Taxonomy" id="1360"/>
    <lineage>
        <taxon>Bacteria</taxon>
        <taxon>Bacillati</taxon>
        <taxon>Bacillota</taxon>
        <taxon>Bacilli</taxon>
        <taxon>Lactobacillales</taxon>
        <taxon>Streptococcaceae</taxon>
        <taxon>Lactococcus</taxon>
    </lineage>
</organism>
<name>LCND_LACLL</name>
<feature type="chain" id="PRO_0000201878" description="Lactococcin A secretion protein LcnD">
    <location>
        <begin position="1"/>
        <end position="474"/>
    </location>
</feature>
<feature type="topological domain" description="Cytoplasmic" evidence="2">
    <location>
        <begin position="1"/>
        <end position="21"/>
    </location>
</feature>
<feature type="transmembrane region" description="Helical" evidence="1">
    <location>
        <begin position="22"/>
        <end position="44"/>
    </location>
</feature>
<feature type="topological domain" description="Extracellular" evidence="2">
    <location>
        <begin position="45"/>
        <end position="474"/>
    </location>
</feature>
<comment type="function">
    <text>Involved in the secretion of lactococcin A.</text>
</comment>
<comment type="subcellular location">
    <subcellularLocation>
        <location>Cell membrane</location>
        <topology>Single-pass type II membrane protein</topology>
    </subcellularLocation>
</comment>
<comment type="similarity">
    <text evidence="1">Belongs to the membrane fusion protein (MFP) (TC 8.A.1) family.</text>
</comment>
<keyword id="KW-0080">Bacteriocin transport</keyword>
<keyword id="KW-1003">Cell membrane</keyword>
<keyword id="KW-0472">Membrane</keyword>
<keyword id="KW-0614">Plasmid</keyword>
<keyword id="KW-0653">Protein transport</keyword>
<keyword id="KW-0812">Transmembrane</keyword>
<keyword id="KW-1133">Transmembrane helix</keyword>
<keyword id="KW-0813">Transport</keyword>